<dbReference type="EC" id="3.5.1.122" evidence="2"/>
<dbReference type="EMBL" id="CM000158">
    <property type="protein sequence ID" value="EDW92031.1"/>
    <property type="molecule type" value="Genomic_DNA"/>
</dbReference>
<dbReference type="SMR" id="B4P6V4"/>
<dbReference type="EnsemblMetazoa" id="FBtr0258253">
    <property type="protein sequence ID" value="FBpp0256745"/>
    <property type="gene ID" value="FBgn0229529"/>
</dbReference>
<dbReference type="EnsemblMetazoa" id="XM_002092283.3">
    <property type="protein sequence ID" value="XP_002092319.1"/>
    <property type="gene ID" value="LOC6531520"/>
</dbReference>
<dbReference type="GeneID" id="6531520"/>
<dbReference type="KEGG" id="dya:Dyak_GE11735"/>
<dbReference type="CTD" id="36743"/>
<dbReference type="eggNOG" id="KOG3261">
    <property type="taxonomic scope" value="Eukaryota"/>
</dbReference>
<dbReference type="HOGENOM" id="CLU_091083_1_0_1"/>
<dbReference type="OMA" id="GWGTVYS"/>
<dbReference type="OrthoDB" id="191192at2759"/>
<dbReference type="PhylomeDB" id="B4P6V4"/>
<dbReference type="ChiTaRS" id="Zasp52">
    <property type="organism name" value="fly"/>
</dbReference>
<dbReference type="Proteomes" id="UP000002282">
    <property type="component" value="Chromosome 2R"/>
</dbReference>
<dbReference type="GO" id="GO:0005829">
    <property type="term" value="C:cytosol"/>
    <property type="evidence" value="ECO:0007669"/>
    <property type="project" value="TreeGrafter"/>
</dbReference>
<dbReference type="GO" id="GO:0005634">
    <property type="term" value="C:nucleus"/>
    <property type="evidence" value="ECO:0007669"/>
    <property type="project" value="TreeGrafter"/>
</dbReference>
<dbReference type="GO" id="GO:0008418">
    <property type="term" value="F:protein-N-terminal asparagine amidohydrolase activity"/>
    <property type="evidence" value="ECO:0007669"/>
    <property type="project" value="InterPro"/>
</dbReference>
<dbReference type="GO" id="GO:0070773">
    <property type="term" value="F:protein-N-terminal glutamine amidohydrolase activity"/>
    <property type="evidence" value="ECO:0007669"/>
    <property type="project" value="UniProtKB-EC"/>
</dbReference>
<dbReference type="FunFam" id="3.10.620.10:FF:000001">
    <property type="entry name" value="Blast:Protein N-terminal glutamine amidohydrolase"/>
    <property type="match status" value="1"/>
</dbReference>
<dbReference type="Gene3D" id="3.10.620.10">
    <property type="entry name" value="Protein N-terminal glutamine amidohydrolase, alpha beta roll"/>
    <property type="match status" value="1"/>
</dbReference>
<dbReference type="InterPro" id="IPR037132">
    <property type="entry name" value="N_Gln_amidohydro_ab_roll_sf"/>
</dbReference>
<dbReference type="InterPro" id="IPR039733">
    <property type="entry name" value="NTAQ1"/>
</dbReference>
<dbReference type="InterPro" id="IPR023128">
    <property type="entry name" value="Prot_N_Gln_amidohydro_ab_roll"/>
</dbReference>
<dbReference type="PANTHER" id="PTHR13035">
    <property type="entry name" value="PROTEIN N-TERMINAL GLUTAMINE AMIDOHYDROLASE"/>
    <property type="match status" value="1"/>
</dbReference>
<dbReference type="PANTHER" id="PTHR13035:SF0">
    <property type="entry name" value="PROTEIN N-TERMINAL GLUTAMINE AMIDOHYDROLASE"/>
    <property type="match status" value="1"/>
</dbReference>
<dbReference type="Pfam" id="PF09764">
    <property type="entry name" value="Nt_Gln_amidase"/>
    <property type="match status" value="1"/>
</dbReference>
<comment type="function">
    <text evidence="2">Mediates the side-chain deamidation of N-terminal glutamine residues to glutamate, an important step in N-end rule pathway of protein degradation. Conversion of the resulting N-terminal glutamine to glutamate renders the protein susceptible to arginylation, polyubiquitination and degradation as specified by the N-end rule. Does not act on substrates with internal or C-terminal glutamine and does not act on non-glutamine residues in any position.</text>
</comment>
<comment type="catalytic activity">
    <reaction evidence="2">
        <text>N-terminal L-glutaminyl-[protein] + H2O = N-terminal L-glutamyl-[protein] + NH4(+)</text>
        <dbReference type="Rhea" id="RHEA:50680"/>
        <dbReference type="Rhea" id="RHEA-COMP:12668"/>
        <dbReference type="Rhea" id="RHEA-COMP:12777"/>
        <dbReference type="ChEBI" id="CHEBI:15377"/>
        <dbReference type="ChEBI" id="CHEBI:28938"/>
        <dbReference type="ChEBI" id="CHEBI:64721"/>
        <dbReference type="ChEBI" id="CHEBI:64722"/>
        <dbReference type="EC" id="3.5.1.122"/>
    </reaction>
</comment>
<comment type="subunit">
    <text evidence="3">Monomer.</text>
</comment>
<comment type="similarity">
    <text evidence="4">Belongs to the NTAQ1 family.</text>
</comment>
<name>NTAQ1_DROYA</name>
<sequence>MTTDFLFPKIADCSYVSCYCEENVWKLCEQVKRTRPEELSKCYAVFVSNEGRTVPLWRQKAGRGDDQVVIWDYHVFFIHNPLLNRCLVFDLDTTLPFPTYFHKYVTETFRSDLALRPEHHRFFRVIPADTYLIEFSSDRRHMRRPDGSWIKPPPSYPPILSNSNMHCLGDFICMSAGKGPGAVYSLSEFVQNFYKSPHVMAQNNK</sequence>
<evidence type="ECO:0000250" key="1"/>
<evidence type="ECO:0000250" key="2">
    <source>
        <dbReference type="UniProtKB" id="Q80WB5"/>
    </source>
</evidence>
<evidence type="ECO:0000250" key="3">
    <source>
        <dbReference type="UniProtKB" id="Q96HA8"/>
    </source>
</evidence>
<evidence type="ECO:0000305" key="4"/>
<reference key="1">
    <citation type="journal article" date="2007" name="Nature">
        <title>Evolution of genes and genomes on the Drosophila phylogeny.</title>
        <authorList>
            <consortium name="Drosophila 12 genomes consortium"/>
        </authorList>
    </citation>
    <scope>NUCLEOTIDE SEQUENCE [LARGE SCALE GENOMIC DNA]</scope>
    <source>
        <strain>Tai18E2 / Tucson 14021-0261.01</strain>
    </source>
</reference>
<accession>B4P6V4</accession>
<keyword id="KW-0378">Hydrolase</keyword>
<feature type="chain" id="PRO_0000381833" description="Protein N-terminal glutamine amidohydrolase">
    <location>
        <begin position="1"/>
        <end position="205"/>
    </location>
</feature>
<feature type="active site" evidence="1">
    <location>
        <position position="20"/>
    </location>
</feature>
<feature type="active site" evidence="1">
    <location>
        <position position="74"/>
    </location>
</feature>
<feature type="active site" evidence="1">
    <location>
        <position position="90"/>
    </location>
</feature>
<proteinExistence type="inferred from homology"/>
<gene>
    <name type="primary">tun</name>
    <name type="ORF">GE11735</name>
</gene>
<organism>
    <name type="scientific">Drosophila yakuba</name>
    <name type="common">Fruit fly</name>
    <dbReference type="NCBI Taxonomy" id="7245"/>
    <lineage>
        <taxon>Eukaryota</taxon>
        <taxon>Metazoa</taxon>
        <taxon>Ecdysozoa</taxon>
        <taxon>Arthropoda</taxon>
        <taxon>Hexapoda</taxon>
        <taxon>Insecta</taxon>
        <taxon>Pterygota</taxon>
        <taxon>Neoptera</taxon>
        <taxon>Endopterygota</taxon>
        <taxon>Diptera</taxon>
        <taxon>Brachycera</taxon>
        <taxon>Muscomorpha</taxon>
        <taxon>Ephydroidea</taxon>
        <taxon>Drosophilidae</taxon>
        <taxon>Drosophila</taxon>
        <taxon>Sophophora</taxon>
    </lineage>
</organism>
<protein>
    <recommendedName>
        <fullName>Protein N-terminal glutamine amidohydrolase</fullName>
        <ecNumber evidence="2">3.5.1.122</ecNumber>
    </recommendedName>
    <alternativeName>
        <fullName>Protein NH2-terminal glutamine deamidase</fullName>
        <shortName>N-terminal Gln amidase</shortName>
        <shortName>Nt(Q)-amidase</shortName>
    </alternativeName>
    <alternativeName>
        <fullName>Protein tungus</fullName>
    </alternativeName>
</protein>